<sequence>MAGGRRGGRRRKKVCYFTSNGITHIDYKDVELLKKFVSERGKILPRRVTGTSAKYQRKLTVAIKRSRQMALLPFVAEEK</sequence>
<name>RS18_LISMF</name>
<protein>
    <recommendedName>
        <fullName evidence="1">Small ribosomal subunit protein bS18</fullName>
    </recommendedName>
    <alternativeName>
        <fullName evidence="2">30S ribosomal protein S18</fullName>
    </alternativeName>
</protein>
<dbReference type="EMBL" id="AE017262">
    <property type="protein sequence ID" value="AAT02843.1"/>
    <property type="molecule type" value="Genomic_DNA"/>
</dbReference>
<dbReference type="RefSeq" id="WP_003721669.1">
    <property type="nucleotide sequence ID" value="NC_002973.6"/>
</dbReference>
<dbReference type="SMR" id="Q725B8"/>
<dbReference type="GeneID" id="93237944"/>
<dbReference type="KEGG" id="lmf:LMOf2365_0055"/>
<dbReference type="HOGENOM" id="CLU_148710_2_2_9"/>
<dbReference type="GO" id="GO:0022627">
    <property type="term" value="C:cytosolic small ribosomal subunit"/>
    <property type="evidence" value="ECO:0007669"/>
    <property type="project" value="TreeGrafter"/>
</dbReference>
<dbReference type="GO" id="GO:0070181">
    <property type="term" value="F:small ribosomal subunit rRNA binding"/>
    <property type="evidence" value="ECO:0007669"/>
    <property type="project" value="TreeGrafter"/>
</dbReference>
<dbReference type="GO" id="GO:0003735">
    <property type="term" value="F:structural constituent of ribosome"/>
    <property type="evidence" value="ECO:0007669"/>
    <property type="project" value="InterPro"/>
</dbReference>
<dbReference type="GO" id="GO:0006412">
    <property type="term" value="P:translation"/>
    <property type="evidence" value="ECO:0007669"/>
    <property type="project" value="UniProtKB-UniRule"/>
</dbReference>
<dbReference type="FunFam" id="4.10.640.10:FF:000003">
    <property type="entry name" value="30S ribosomal protein S18"/>
    <property type="match status" value="1"/>
</dbReference>
<dbReference type="Gene3D" id="4.10.640.10">
    <property type="entry name" value="Ribosomal protein S18"/>
    <property type="match status" value="1"/>
</dbReference>
<dbReference type="HAMAP" id="MF_00270">
    <property type="entry name" value="Ribosomal_bS18"/>
    <property type="match status" value="1"/>
</dbReference>
<dbReference type="InterPro" id="IPR001648">
    <property type="entry name" value="Ribosomal_bS18"/>
</dbReference>
<dbReference type="InterPro" id="IPR018275">
    <property type="entry name" value="Ribosomal_bS18_CS"/>
</dbReference>
<dbReference type="InterPro" id="IPR036870">
    <property type="entry name" value="Ribosomal_bS18_sf"/>
</dbReference>
<dbReference type="NCBIfam" id="TIGR00165">
    <property type="entry name" value="S18"/>
    <property type="match status" value="1"/>
</dbReference>
<dbReference type="PANTHER" id="PTHR13479">
    <property type="entry name" value="30S RIBOSOMAL PROTEIN S18"/>
    <property type="match status" value="1"/>
</dbReference>
<dbReference type="PANTHER" id="PTHR13479:SF40">
    <property type="entry name" value="SMALL RIBOSOMAL SUBUNIT PROTEIN BS18M"/>
    <property type="match status" value="1"/>
</dbReference>
<dbReference type="Pfam" id="PF01084">
    <property type="entry name" value="Ribosomal_S18"/>
    <property type="match status" value="1"/>
</dbReference>
<dbReference type="PRINTS" id="PR00974">
    <property type="entry name" value="RIBOSOMALS18"/>
</dbReference>
<dbReference type="SUPFAM" id="SSF46911">
    <property type="entry name" value="Ribosomal protein S18"/>
    <property type="match status" value="1"/>
</dbReference>
<dbReference type="PROSITE" id="PS00057">
    <property type="entry name" value="RIBOSOMAL_S18"/>
    <property type="match status" value="1"/>
</dbReference>
<proteinExistence type="inferred from homology"/>
<feature type="chain" id="PRO_0000111172" description="Small ribosomal subunit protein bS18">
    <location>
        <begin position="1"/>
        <end position="79"/>
    </location>
</feature>
<comment type="function">
    <text evidence="1">Binds as a heterodimer with protein bS6 to the central domain of the 16S rRNA, where it helps stabilize the platform of the 30S subunit.</text>
</comment>
<comment type="subunit">
    <text evidence="1">Part of the 30S ribosomal subunit. Forms a tight heterodimer with protein bS6.</text>
</comment>
<comment type="similarity">
    <text evidence="1">Belongs to the bacterial ribosomal protein bS18 family.</text>
</comment>
<reference key="1">
    <citation type="journal article" date="2004" name="Nucleic Acids Res.">
        <title>Whole genome comparisons of serotype 4b and 1/2a strains of the food-borne pathogen Listeria monocytogenes reveal new insights into the core genome components of this species.</title>
        <authorList>
            <person name="Nelson K.E."/>
            <person name="Fouts D.E."/>
            <person name="Mongodin E.F."/>
            <person name="Ravel J."/>
            <person name="DeBoy R.T."/>
            <person name="Kolonay J.F."/>
            <person name="Rasko D.A."/>
            <person name="Angiuoli S.V."/>
            <person name="Gill S.R."/>
            <person name="Paulsen I.T."/>
            <person name="Peterson J.D."/>
            <person name="White O."/>
            <person name="Nelson W.C."/>
            <person name="Nierman W.C."/>
            <person name="Beanan M.J."/>
            <person name="Brinkac L.M."/>
            <person name="Daugherty S.C."/>
            <person name="Dodson R.J."/>
            <person name="Durkin A.S."/>
            <person name="Madupu R."/>
            <person name="Haft D.H."/>
            <person name="Selengut J."/>
            <person name="Van Aken S.E."/>
            <person name="Khouri H.M."/>
            <person name="Fedorova N."/>
            <person name="Forberger H.A."/>
            <person name="Tran B."/>
            <person name="Kathariou S."/>
            <person name="Wonderling L.D."/>
            <person name="Uhlich G.A."/>
            <person name="Bayles D.O."/>
            <person name="Luchansky J.B."/>
            <person name="Fraser C.M."/>
        </authorList>
    </citation>
    <scope>NUCLEOTIDE SEQUENCE [LARGE SCALE GENOMIC DNA]</scope>
    <source>
        <strain>F2365</strain>
    </source>
</reference>
<gene>
    <name evidence="1" type="primary">rpsR</name>
    <name type="ordered locus">LMOf2365_0055</name>
</gene>
<accession>Q725B8</accession>
<organism>
    <name type="scientific">Listeria monocytogenes serotype 4b (strain F2365)</name>
    <dbReference type="NCBI Taxonomy" id="265669"/>
    <lineage>
        <taxon>Bacteria</taxon>
        <taxon>Bacillati</taxon>
        <taxon>Bacillota</taxon>
        <taxon>Bacilli</taxon>
        <taxon>Bacillales</taxon>
        <taxon>Listeriaceae</taxon>
        <taxon>Listeria</taxon>
    </lineage>
</organism>
<keyword id="KW-0687">Ribonucleoprotein</keyword>
<keyword id="KW-0689">Ribosomal protein</keyword>
<keyword id="KW-0694">RNA-binding</keyword>
<keyword id="KW-0699">rRNA-binding</keyword>
<evidence type="ECO:0000255" key="1">
    <source>
        <dbReference type="HAMAP-Rule" id="MF_00270"/>
    </source>
</evidence>
<evidence type="ECO:0000305" key="2"/>